<accession>B5FHD7</accession>
<keyword id="KW-0687">Ribonucleoprotein</keyword>
<keyword id="KW-0689">Ribosomal protein</keyword>
<keyword id="KW-0694">RNA-binding</keyword>
<keyword id="KW-0699">rRNA-binding</keyword>
<comment type="function">
    <text evidence="1">Binds directly to 16S ribosomal RNA.</text>
</comment>
<comment type="similarity">
    <text evidence="1">Belongs to the bacterial ribosomal protein bS20 family.</text>
</comment>
<evidence type="ECO:0000255" key="1">
    <source>
        <dbReference type="HAMAP-Rule" id="MF_00500"/>
    </source>
</evidence>
<evidence type="ECO:0000256" key="2">
    <source>
        <dbReference type="SAM" id="MobiDB-lite"/>
    </source>
</evidence>
<evidence type="ECO:0000305" key="3"/>
<proteinExistence type="inferred from homology"/>
<reference key="1">
    <citation type="journal article" date="2011" name="J. Bacteriol.">
        <title>Comparative genomics of 28 Salmonella enterica isolates: evidence for CRISPR-mediated adaptive sublineage evolution.</title>
        <authorList>
            <person name="Fricke W.F."/>
            <person name="Mammel M.K."/>
            <person name="McDermott P.F."/>
            <person name="Tartera C."/>
            <person name="White D.G."/>
            <person name="Leclerc J.E."/>
            <person name="Ravel J."/>
            <person name="Cebula T.A."/>
        </authorList>
    </citation>
    <scope>NUCLEOTIDE SEQUENCE [LARGE SCALE GENOMIC DNA]</scope>
    <source>
        <strain>CT_02021853</strain>
    </source>
</reference>
<name>RS20_SALDC</name>
<protein>
    <recommendedName>
        <fullName evidence="1">Small ribosomal subunit protein bS20</fullName>
    </recommendedName>
    <alternativeName>
        <fullName evidence="3">30S ribosomal protein S20</fullName>
    </alternativeName>
</protein>
<dbReference type="EMBL" id="CP001144">
    <property type="protein sequence ID" value="ACH74841.1"/>
    <property type="molecule type" value="Genomic_DNA"/>
</dbReference>
<dbReference type="RefSeq" id="WP_001518655.1">
    <property type="nucleotide sequence ID" value="NC_011205.1"/>
</dbReference>
<dbReference type="SMR" id="B5FHD7"/>
<dbReference type="GeneID" id="93310349"/>
<dbReference type="KEGG" id="sed:SeD_A0047"/>
<dbReference type="HOGENOM" id="CLU_160655_4_0_6"/>
<dbReference type="Proteomes" id="UP000008322">
    <property type="component" value="Chromosome"/>
</dbReference>
<dbReference type="GO" id="GO:0005829">
    <property type="term" value="C:cytosol"/>
    <property type="evidence" value="ECO:0007669"/>
    <property type="project" value="TreeGrafter"/>
</dbReference>
<dbReference type="GO" id="GO:0015935">
    <property type="term" value="C:small ribosomal subunit"/>
    <property type="evidence" value="ECO:0007669"/>
    <property type="project" value="TreeGrafter"/>
</dbReference>
<dbReference type="GO" id="GO:0070181">
    <property type="term" value="F:small ribosomal subunit rRNA binding"/>
    <property type="evidence" value="ECO:0007669"/>
    <property type="project" value="TreeGrafter"/>
</dbReference>
<dbReference type="GO" id="GO:0003735">
    <property type="term" value="F:structural constituent of ribosome"/>
    <property type="evidence" value="ECO:0007669"/>
    <property type="project" value="InterPro"/>
</dbReference>
<dbReference type="GO" id="GO:0006412">
    <property type="term" value="P:translation"/>
    <property type="evidence" value="ECO:0007669"/>
    <property type="project" value="UniProtKB-UniRule"/>
</dbReference>
<dbReference type="FunFam" id="1.20.58.110:FF:000001">
    <property type="entry name" value="30S ribosomal protein S20"/>
    <property type="match status" value="1"/>
</dbReference>
<dbReference type="Gene3D" id="1.20.58.110">
    <property type="entry name" value="Ribosomal protein S20"/>
    <property type="match status" value="1"/>
</dbReference>
<dbReference type="HAMAP" id="MF_00500">
    <property type="entry name" value="Ribosomal_bS20"/>
    <property type="match status" value="1"/>
</dbReference>
<dbReference type="InterPro" id="IPR002583">
    <property type="entry name" value="Ribosomal_bS20"/>
</dbReference>
<dbReference type="InterPro" id="IPR036510">
    <property type="entry name" value="Ribosomal_bS20_sf"/>
</dbReference>
<dbReference type="NCBIfam" id="TIGR00029">
    <property type="entry name" value="S20"/>
    <property type="match status" value="1"/>
</dbReference>
<dbReference type="PANTHER" id="PTHR33398">
    <property type="entry name" value="30S RIBOSOMAL PROTEIN S20"/>
    <property type="match status" value="1"/>
</dbReference>
<dbReference type="PANTHER" id="PTHR33398:SF1">
    <property type="entry name" value="SMALL RIBOSOMAL SUBUNIT PROTEIN BS20C"/>
    <property type="match status" value="1"/>
</dbReference>
<dbReference type="Pfam" id="PF01649">
    <property type="entry name" value="Ribosomal_S20p"/>
    <property type="match status" value="1"/>
</dbReference>
<dbReference type="SUPFAM" id="SSF46992">
    <property type="entry name" value="Ribosomal protein S20"/>
    <property type="match status" value="1"/>
</dbReference>
<organism>
    <name type="scientific">Salmonella dublin (strain CT_02021853)</name>
    <dbReference type="NCBI Taxonomy" id="439851"/>
    <lineage>
        <taxon>Bacteria</taxon>
        <taxon>Pseudomonadati</taxon>
        <taxon>Pseudomonadota</taxon>
        <taxon>Gammaproteobacteria</taxon>
        <taxon>Enterobacterales</taxon>
        <taxon>Enterobacteriaceae</taxon>
        <taxon>Salmonella</taxon>
    </lineage>
</organism>
<gene>
    <name evidence="1" type="primary">rpsT</name>
    <name type="ordered locus">SeD_A0047</name>
</gene>
<sequence>MANIKSAKKRAVQSEKARKHNASRRSMMRTFIKKVYAAIEAGDKAAALKAFNEMQPIVDRQAAKGLIHKNKAARHKANLTAQINKLA</sequence>
<feature type="chain" id="PRO_1000126505" description="Small ribosomal subunit protein bS20">
    <location>
        <begin position="1"/>
        <end position="87"/>
    </location>
</feature>
<feature type="region of interest" description="Disordered" evidence="2">
    <location>
        <begin position="1"/>
        <end position="26"/>
    </location>
</feature>